<sequence length="505" mass="55966">MTDKHNKKYVVALDQGTTSSRAIVFDRDANVVSQAQREFAQFYPQAGWVEHDPMEIWATQSSTLVEALAQASIEHDQVAAIGITNQRETTVVWDRHSGRPIHNAIVWQCRRSAAICAQLKRDGLEDYIRETTGLVTDPYFSGTKLKWILDNVEGARERARNGDLLFGTIDTWLIWKLTEGKVHVTDYTNASRTMLFNIHSRDWDARMLEVLDIPRSMLPEVRNSSEVYGNARIGGVGGGELPIAGIAGDQQAALFGQMCVEPGQAKNTYGTGCFLLMHTGDKAVKSTHGLLTTIACGPRGEVGYALEGAVFNGGSTVQWLRDELKVINDSFDSEYFATKVKDSNGVYLVPAFTGLGAPYWDPYARGAVFGLTRGVKADHLIRATLESIAYQTRDVLDAMQRDAGERLRALRVDGGAVANNFLMQFQADILGTRVERPVMRETTALGAAYLAGLACGFWSSLDELKSKAVIERVFEPECDEPRREKLYAGWKKAVERTRGWDDGEL</sequence>
<name>GLPK2_PSEAE</name>
<dbReference type="EC" id="2.7.1.30" evidence="1"/>
<dbReference type="EMBL" id="U49666">
    <property type="protein sequence ID" value="AAB57804.1"/>
    <property type="molecule type" value="Genomic_DNA"/>
</dbReference>
<dbReference type="EMBL" id="AE004091">
    <property type="protein sequence ID" value="AAG06970.1"/>
    <property type="molecule type" value="Genomic_DNA"/>
</dbReference>
<dbReference type="PIR" id="H83196">
    <property type="entry name" value="H83196"/>
</dbReference>
<dbReference type="RefSeq" id="NP_252272.1">
    <property type="nucleotide sequence ID" value="NC_002516.2"/>
</dbReference>
<dbReference type="RefSeq" id="WP_003113886.1">
    <property type="nucleotide sequence ID" value="NZ_QZGE01000001.1"/>
</dbReference>
<dbReference type="SMR" id="Q51390"/>
<dbReference type="FunCoup" id="Q51390">
    <property type="interactions" value="612"/>
</dbReference>
<dbReference type="STRING" id="208964.PA3582"/>
<dbReference type="PaxDb" id="208964-PA3582"/>
<dbReference type="GeneID" id="880162"/>
<dbReference type="KEGG" id="pae:PA3582"/>
<dbReference type="PATRIC" id="fig|208964.12.peg.3748"/>
<dbReference type="PseudoCAP" id="PA3582"/>
<dbReference type="HOGENOM" id="CLU_009281_2_3_6"/>
<dbReference type="InParanoid" id="Q51390"/>
<dbReference type="OrthoDB" id="9805576at2"/>
<dbReference type="PhylomeDB" id="Q51390"/>
<dbReference type="BioCyc" id="PAER208964:G1FZ6-3651-MONOMER"/>
<dbReference type="UniPathway" id="UPA00618">
    <property type="reaction ID" value="UER00672"/>
</dbReference>
<dbReference type="Proteomes" id="UP000002438">
    <property type="component" value="Chromosome"/>
</dbReference>
<dbReference type="GO" id="GO:0005829">
    <property type="term" value="C:cytosol"/>
    <property type="evidence" value="ECO:0000318"/>
    <property type="project" value="GO_Central"/>
</dbReference>
<dbReference type="GO" id="GO:0005524">
    <property type="term" value="F:ATP binding"/>
    <property type="evidence" value="ECO:0007669"/>
    <property type="project" value="UniProtKB-UniRule"/>
</dbReference>
<dbReference type="GO" id="GO:0004370">
    <property type="term" value="F:glycerol kinase activity"/>
    <property type="evidence" value="ECO:0000250"/>
    <property type="project" value="UniProtKB"/>
</dbReference>
<dbReference type="GO" id="GO:0019563">
    <property type="term" value="P:glycerol catabolic process"/>
    <property type="evidence" value="ECO:0000318"/>
    <property type="project" value="GO_Central"/>
</dbReference>
<dbReference type="GO" id="GO:0006071">
    <property type="term" value="P:glycerol metabolic process"/>
    <property type="evidence" value="ECO:0000250"/>
    <property type="project" value="UniProtKB"/>
</dbReference>
<dbReference type="GO" id="GO:0006072">
    <property type="term" value="P:glycerol-3-phosphate metabolic process"/>
    <property type="evidence" value="ECO:0007669"/>
    <property type="project" value="InterPro"/>
</dbReference>
<dbReference type="CDD" id="cd07786">
    <property type="entry name" value="FGGY_EcGK_like"/>
    <property type="match status" value="1"/>
</dbReference>
<dbReference type="FunFam" id="3.30.420.40:FF:000007">
    <property type="entry name" value="Glycerol kinase"/>
    <property type="match status" value="1"/>
</dbReference>
<dbReference type="FunFam" id="3.30.420.40:FF:000008">
    <property type="entry name" value="Glycerol kinase"/>
    <property type="match status" value="1"/>
</dbReference>
<dbReference type="Gene3D" id="3.30.420.40">
    <property type="match status" value="2"/>
</dbReference>
<dbReference type="HAMAP" id="MF_00186">
    <property type="entry name" value="Glycerol_kin"/>
    <property type="match status" value="1"/>
</dbReference>
<dbReference type="InterPro" id="IPR043129">
    <property type="entry name" value="ATPase_NBD"/>
</dbReference>
<dbReference type="InterPro" id="IPR000577">
    <property type="entry name" value="Carb_kinase_FGGY"/>
</dbReference>
<dbReference type="InterPro" id="IPR018483">
    <property type="entry name" value="Carb_kinase_FGGY_CS"/>
</dbReference>
<dbReference type="InterPro" id="IPR018485">
    <property type="entry name" value="FGGY_C"/>
</dbReference>
<dbReference type="InterPro" id="IPR018484">
    <property type="entry name" value="FGGY_N"/>
</dbReference>
<dbReference type="InterPro" id="IPR005999">
    <property type="entry name" value="Glycerol_kin"/>
</dbReference>
<dbReference type="NCBIfam" id="TIGR01311">
    <property type="entry name" value="glycerol_kin"/>
    <property type="match status" value="1"/>
</dbReference>
<dbReference type="NCBIfam" id="NF000756">
    <property type="entry name" value="PRK00047.1"/>
    <property type="match status" value="1"/>
</dbReference>
<dbReference type="PANTHER" id="PTHR10196:SF69">
    <property type="entry name" value="GLYCEROL KINASE"/>
    <property type="match status" value="1"/>
</dbReference>
<dbReference type="PANTHER" id="PTHR10196">
    <property type="entry name" value="SUGAR KINASE"/>
    <property type="match status" value="1"/>
</dbReference>
<dbReference type="Pfam" id="PF02782">
    <property type="entry name" value="FGGY_C"/>
    <property type="match status" value="1"/>
</dbReference>
<dbReference type="Pfam" id="PF00370">
    <property type="entry name" value="FGGY_N"/>
    <property type="match status" value="1"/>
</dbReference>
<dbReference type="PIRSF" id="PIRSF000538">
    <property type="entry name" value="GlpK"/>
    <property type="match status" value="1"/>
</dbReference>
<dbReference type="SUPFAM" id="SSF53067">
    <property type="entry name" value="Actin-like ATPase domain"/>
    <property type="match status" value="2"/>
</dbReference>
<dbReference type="PROSITE" id="PS00933">
    <property type="entry name" value="FGGY_KINASES_1"/>
    <property type="match status" value="1"/>
</dbReference>
<dbReference type="PROSITE" id="PS00445">
    <property type="entry name" value="FGGY_KINASES_2"/>
    <property type="match status" value="1"/>
</dbReference>
<reference key="1">
    <citation type="journal article" date="1997" name="Microbiology">
        <title>Structure and gene-polypeptide relationships of the region encoding glycerol diffusion facilitator (glpF) and glycerol kinase (glpK) of Pseudomonas aeruginosa.</title>
        <authorList>
            <person name="Schweizer H.P."/>
            <person name="Jump R."/>
            <person name="Po C."/>
        </authorList>
    </citation>
    <scope>NUCLEOTIDE SEQUENCE [GENOMIC DNA]</scope>
    <source>
        <strain>ATCC 15692 / DSM 22644 / CIP 104116 / JCM 14847 / LMG 12228 / 1C / PRS 101 / PAO1</strain>
    </source>
</reference>
<reference key="2">
    <citation type="journal article" date="2000" name="Nature">
        <title>Complete genome sequence of Pseudomonas aeruginosa PAO1, an opportunistic pathogen.</title>
        <authorList>
            <person name="Stover C.K."/>
            <person name="Pham X.-Q.T."/>
            <person name="Erwin A.L."/>
            <person name="Mizoguchi S.D."/>
            <person name="Warrener P."/>
            <person name="Hickey M.J."/>
            <person name="Brinkman F.S.L."/>
            <person name="Hufnagle W.O."/>
            <person name="Kowalik D.J."/>
            <person name="Lagrou M."/>
            <person name="Garber R.L."/>
            <person name="Goltry L."/>
            <person name="Tolentino E."/>
            <person name="Westbrock-Wadman S."/>
            <person name="Yuan Y."/>
            <person name="Brody L.L."/>
            <person name="Coulter S.N."/>
            <person name="Folger K.R."/>
            <person name="Kas A."/>
            <person name="Larbig K."/>
            <person name="Lim R.M."/>
            <person name="Smith K.A."/>
            <person name="Spencer D.H."/>
            <person name="Wong G.K.-S."/>
            <person name="Wu Z."/>
            <person name="Paulsen I.T."/>
            <person name="Reizer J."/>
            <person name="Saier M.H. Jr."/>
            <person name="Hancock R.E.W."/>
            <person name="Lory S."/>
            <person name="Olson M.V."/>
        </authorList>
    </citation>
    <scope>NUCLEOTIDE SEQUENCE [LARGE SCALE GENOMIC DNA]</scope>
    <source>
        <strain>ATCC 15692 / DSM 22644 / CIP 104116 / JCM 14847 / LMG 12228 / 1C / PRS 101 / PAO1</strain>
    </source>
</reference>
<feature type="chain" id="PRO_0000059476" description="Glycerol kinase 2">
    <location>
        <begin position="1"/>
        <end position="505"/>
    </location>
</feature>
<feature type="binding site" evidence="1">
    <location>
        <position position="17"/>
    </location>
    <ligand>
        <name>ADP</name>
        <dbReference type="ChEBI" id="CHEBI:456216"/>
    </ligand>
</feature>
<feature type="binding site" evidence="1">
    <location>
        <position position="17"/>
    </location>
    <ligand>
        <name>ATP</name>
        <dbReference type="ChEBI" id="CHEBI:30616"/>
    </ligand>
</feature>
<feature type="binding site" evidence="1">
    <location>
        <position position="17"/>
    </location>
    <ligand>
        <name>sn-glycerol 3-phosphate</name>
        <dbReference type="ChEBI" id="CHEBI:57597"/>
    </ligand>
</feature>
<feature type="binding site" evidence="1">
    <location>
        <position position="18"/>
    </location>
    <ligand>
        <name>ATP</name>
        <dbReference type="ChEBI" id="CHEBI:30616"/>
    </ligand>
</feature>
<feature type="binding site" evidence="1">
    <location>
        <position position="19"/>
    </location>
    <ligand>
        <name>ATP</name>
        <dbReference type="ChEBI" id="CHEBI:30616"/>
    </ligand>
</feature>
<feature type="binding site" evidence="1">
    <location>
        <position position="21"/>
    </location>
    <ligand>
        <name>ADP</name>
        <dbReference type="ChEBI" id="CHEBI:456216"/>
    </ligand>
</feature>
<feature type="binding site" evidence="1">
    <location>
        <position position="87"/>
    </location>
    <ligand>
        <name>glycerol</name>
        <dbReference type="ChEBI" id="CHEBI:17754"/>
    </ligand>
</feature>
<feature type="binding site" evidence="1">
    <location>
        <position position="87"/>
    </location>
    <ligand>
        <name>sn-glycerol 3-phosphate</name>
        <dbReference type="ChEBI" id="CHEBI:57597"/>
    </ligand>
</feature>
<feature type="binding site" evidence="1">
    <location>
        <position position="88"/>
    </location>
    <ligand>
        <name>glycerol</name>
        <dbReference type="ChEBI" id="CHEBI:17754"/>
    </ligand>
</feature>
<feature type="binding site" evidence="1">
    <location>
        <position position="88"/>
    </location>
    <ligand>
        <name>sn-glycerol 3-phosphate</name>
        <dbReference type="ChEBI" id="CHEBI:57597"/>
    </ligand>
</feature>
<feature type="binding site" evidence="1">
    <location>
        <position position="139"/>
    </location>
    <ligand>
        <name>glycerol</name>
        <dbReference type="ChEBI" id="CHEBI:17754"/>
    </ligand>
</feature>
<feature type="binding site" evidence="1">
    <location>
        <position position="139"/>
    </location>
    <ligand>
        <name>sn-glycerol 3-phosphate</name>
        <dbReference type="ChEBI" id="CHEBI:57597"/>
    </ligand>
</feature>
<feature type="binding site" evidence="1">
    <location>
        <position position="249"/>
    </location>
    <ligand>
        <name>glycerol</name>
        <dbReference type="ChEBI" id="CHEBI:17754"/>
    </ligand>
</feature>
<feature type="binding site" evidence="1">
    <location>
        <position position="249"/>
    </location>
    <ligand>
        <name>sn-glycerol 3-phosphate</name>
        <dbReference type="ChEBI" id="CHEBI:57597"/>
    </ligand>
</feature>
<feature type="binding site" evidence="1">
    <location>
        <position position="250"/>
    </location>
    <ligand>
        <name>glycerol</name>
        <dbReference type="ChEBI" id="CHEBI:17754"/>
    </ligand>
</feature>
<feature type="binding site" evidence="1">
    <location>
        <position position="271"/>
    </location>
    <ligand>
        <name>ADP</name>
        <dbReference type="ChEBI" id="CHEBI:456216"/>
    </ligand>
</feature>
<feature type="binding site" evidence="1">
    <location>
        <position position="271"/>
    </location>
    <ligand>
        <name>ATP</name>
        <dbReference type="ChEBI" id="CHEBI:30616"/>
    </ligand>
</feature>
<feature type="binding site" evidence="1">
    <location>
        <position position="314"/>
    </location>
    <ligand>
        <name>ADP</name>
        <dbReference type="ChEBI" id="CHEBI:456216"/>
    </ligand>
</feature>
<feature type="binding site" evidence="1">
    <location>
        <position position="314"/>
    </location>
    <ligand>
        <name>ATP</name>
        <dbReference type="ChEBI" id="CHEBI:30616"/>
    </ligand>
</feature>
<feature type="binding site" evidence="1">
    <location>
        <position position="318"/>
    </location>
    <ligand>
        <name>ATP</name>
        <dbReference type="ChEBI" id="CHEBI:30616"/>
    </ligand>
</feature>
<feature type="binding site" evidence="1">
    <location>
        <position position="415"/>
    </location>
    <ligand>
        <name>ADP</name>
        <dbReference type="ChEBI" id="CHEBI:456216"/>
    </ligand>
</feature>
<feature type="binding site" evidence="1">
    <location>
        <position position="415"/>
    </location>
    <ligand>
        <name>ATP</name>
        <dbReference type="ChEBI" id="CHEBI:30616"/>
    </ligand>
</feature>
<feature type="binding site" evidence="1">
    <location>
        <position position="419"/>
    </location>
    <ligand>
        <name>ADP</name>
        <dbReference type="ChEBI" id="CHEBI:456216"/>
    </ligand>
</feature>
<feature type="sequence conflict" description="In Ref. 1; AAB57804." evidence="2" ref="1">
    <original>H</original>
    <variation>R</variation>
    <location>
        <position position="75"/>
    </location>
</feature>
<feature type="sequence conflict" description="In Ref. 1; AAB57804." evidence="2" ref="1">
    <original>A</original>
    <variation>V</variation>
    <location>
        <position position="104"/>
    </location>
</feature>
<feature type="sequence conflict" description="In Ref. 1; AAB57804." evidence="2" ref="1">
    <original>C</original>
    <variation>R</variation>
    <location>
        <position position="109"/>
    </location>
</feature>
<evidence type="ECO:0000255" key="1">
    <source>
        <dbReference type="HAMAP-Rule" id="MF_00186"/>
    </source>
</evidence>
<evidence type="ECO:0000305" key="2"/>
<proteinExistence type="inferred from homology"/>
<keyword id="KW-0067">ATP-binding</keyword>
<keyword id="KW-0319">Glycerol metabolism</keyword>
<keyword id="KW-0418">Kinase</keyword>
<keyword id="KW-0547">Nucleotide-binding</keyword>
<keyword id="KW-1185">Reference proteome</keyword>
<keyword id="KW-0808">Transferase</keyword>
<protein>
    <recommendedName>
        <fullName evidence="1">Glycerol kinase 2</fullName>
        <ecNumber evidence="1">2.7.1.30</ecNumber>
    </recommendedName>
    <alternativeName>
        <fullName evidence="1">ATP:glycerol 3-phosphotransferase 2</fullName>
    </alternativeName>
    <alternativeName>
        <fullName evidence="1">Glycerokinase 2</fullName>
        <shortName evidence="1">GK 2</shortName>
    </alternativeName>
</protein>
<gene>
    <name evidence="1" type="primary">glpK2</name>
    <name type="synonym">glpK</name>
    <name type="synonym">glpK1</name>
    <name type="ordered locus">PA3582</name>
</gene>
<organism>
    <name type="scientific">Pseudomonas aeruginosa (strain ATCC 15692 / DSM 22644 / CIP 104116 / JCM 14847 / LMG 12228 / 1C / PRS 101 / PAO1)</name>
    <dbReference type="NCBI Taxonomy" id="208964"/>
    <lineage>
        <taxon>Bacteria</taxon>
        <taxon>Pseudomonadati</taxon>
        <taxon>Pseudomonadota</taxon>
        <taxon>Gammaproteobacteria</taxon>
        <taxon>Pseudomonadales</taxon>
        <taxon>Pseudomonadaceae</taxon>
        <taxon>Pseudomonas</taxon>
    </lineage>
</organism>
<accession>Q51390</accession>
<comment type="function">
    <text evidence="1">Key enzyme in the regulation of glycerol uptake and metabolism. Catalyzes the phosphorylation of glycerol to yield sn-glycerol 3-phosphate.</text>
</comment>
<comment type="catalytic activity">
    <reaction evidence="1">
        <text>glycerol + ATP = sn-glycerol 3-phosphate + ADP + H(+)</text>
        <dbReference type="Rhea" id="RHEA:21644"/>
        <dbReference type="ChEBI" id="CHEBI:15378"/>
        <dbReference type="ChEBI" id="CHEBI:17754"/>
        <dbReference type="ChEBI" id="CHEBI:30616"/>
        <dbReference type="ChEBI" id="CHEBI:57597"/>
        <dbReference type="ChEBI" id="CHEBI:456216"/>
        <dbReference type="EC" id="2.7.1.30"/>
    </reaction>
</comment>
<comment type="activity regulation">
    <text evidence="1">Inhibited by fructose 1,6-bisphosphate (FBP).</text>
</comment>
<comment type="pathway">
    <text evidence="1">Polyol metabolism; glycerol degradation via glycerol kinase pathway; sn-glycerol 3-phosphate from glycerol: step 1/1.</text>
</comment>
<comment type="similarity">
    <text evidence="1">Belongs to the FGGY kinase family.</text>
</comment>